<accession>Q8P6T5</accession>
<name>Y2880_XANCP</name>
<keyword id="KW-0997">Cell inner membrane</keyword>
<keyword id="KW-1003">Cell membrane</keyword>
<keyword id="KW-0472">Membrane</keyword>
<keyword id="KW-1185">Reference proteome</keyword>
<keyword id="KW-0812">Transmembrane</keyword>
<keyword id="KW-1133">Transmembrane helix</keyword>
<organism>
    <name type="scientific">Xanthomonas campestris pv. campestris (strain ATCC 33913 / DSM 3586 / NCPPB 528 / LMG 568 / P 25)</name>
    <dbReference type="NCBI Taxonomy" id="190485"/>
    <lineage>
        <taxon>Bacteria</taxon>
        <taxon>Pseudomonadati</taxon>
        <taxon>Pseudomonadota</taxon>
        <taxon>Gammaproteobacteria</taxon>
        <taxon>Lysobacterales</taxon>
        <taxon>Lysobacteraceae</taxon>
        <taxon>Xanthomonas</taxon>
    </lineage>
</organism>
<evidence type="ECO:0000255" key="1">
    <source>
        <dbReference type="HAMAP-Rule" id="MF_00010"/>
    </source>
</evidence>
<proteinExistence type="inferred from homology"/>
<feature type="chain" id="PRO_0000162356" description="UPF0060 membrane protein XCC2880">
    <location>
        <begin position="1"/>
        <end position="111"/>
    </location>
</feature>
<feature type="transmembrane region" description="Helical" evidence="1">
    <location>
        <begin position="8"/>
        <end position="28"/>
    </location>
</feature>
<feature type="transmembrane region" description="Helical" evidence="1">
    <location>
        <begin position="34"/>
        <end position="54"/>
    </location>
</feature>
<feature type="transmembrane region" description="Helical" evidence="1">
    <location>
        <begin position="62"/>
        <end position="82"/>
    </location>
</feature>
<feature type="transmembrane region" description="Helical" evidence="1">
    <location>
        <begin position="91"/>
        <end position="111"/>
    </location>
</feature>
<comment type="subcellular location">
    <subcellularLocation>
        <location evidence="1">Cell inner membrane</location>
        <topology evidence="1">Multi-pass membrane protein</topology>
    </subcellularLocation>
</comment>
<comment type="similarity">
    <text evidence="1">Belongs to the UPF0060 family.</text>
</comment>
<sequence>MSVALTTLLLFVATAVAELVGCYLPYLWLRKGGSVWLLLPAALSLAVFVWLLTLHPAASGRVYAAYGGVYIATALLWLWWVDRVTPTRWDLLGAGCCLLGMAIIMFSPRSG</sequence>
<dbReference type="EMBL" id="AE008922">
    <property type="protein sequence ID" value="AAM42152.1"/>
    <property type="molecule type" value="Genomic_DNA"/>
</dbReference>
<dbReference type="RefSeq" id="NP_638228.1">
    <property type="nucleotide sequence ID" value="NC_003902.1"/>
</dbReference>
<dbReference type="RefSeq" id="WP_011038005.1">
    <property type="nucleotide sequence ID" value="NC_003902.1"/>
</dbReference>
<dbReference type="STRING" id="190485.XCC2880"/>
<dbReference type="EnsemblBacteria" id="AAM42152">
    <property type="protein sequence ID" value="AAM42152"/>
    <property type="gene ID" value="XCC2880"/>
</dbReference>
<dbReference type="KEGG" id="xcc:XCC2880"/>
<dbReference type="PATRIC" id="fig|190485.4.peg.3082"/>
<dbReference type="eggNOG" id="COG1742">
    <property type="taxonomic scope" value="Bacteria"/>
</dbReference>
<dbReference type="HOGENOM" id="CLU_117653_2_0_6"/>
<dbReference type="OrthoDB" id="123240at2"/>
<dbReference type="Proteomes" id="UP000001010">
    <property type="component" value="Chromosome"/>
</dbReference>
<dbReference type="GO" id="GO:0005886">
    <property type="term" value="C:plasma membrane"/>
    <property type="evidence" value="ECO:0000318"/>
    <property type="project" value="GO_Central"/>
</dbReference>
<dbReference type="HAMAP" id="MF_00010">
    <property type="entry name" value="UPF0060"/>
    <property type="match status" value="1"/>
</dbReference>
<dbReference type="InterPro" id="IPR003844">
    <property type="entry name" value="UPF0060"/>
</dbReference>
<dbReference type="NCBIfam" id="NF002586">
    <property type="entry name" value="PRK02237.1"/>
    <property type="match status" value="1"/>
</dbReference>
<dbReference type="PANTHER" id="PTHR36116">
    <property type="entry name" value="UPF0060 MEMBRANE PROTEIN YNFA"/>
    <property type="match status" value="1"/>
</dbReference>
<dbReference type="PANTHER" id="PTHR36116:SF1">
    <property type="entry name" value="UPF0060 MEMBRANE PROTEIN YNFA"/>
    <property type="match status" value="1"/>
</dbReference>
<dbReference type="Pfam" id="PF02694">
    <property type="entry name" value="UPF0060"/>
    <property type="match status" value="1"/>
</dbReference>
<dbReference type="SUPFAM" id="SSF103481">
    <property type="entry name" value="Multidrug resistance efflux transporter EmrE"/>
    <property type="match status" value="1"/>
</dbReference>
<protein>
    <recommendedName>
        <fullName evidence="1">UPF0060 membrane protein XCC2880</fullName>
    </recommendedName>
</protein>
<reference key="1">
    <citation type="journal article" date="2002" name="Nature">
        <title>Comparison of the genomes of two Xanthomonas pathogens with differing host specificities.</title>
        <authorList>
            <person name="da Silva A.C.R."/>
            <person name="Ferro J.A."/>
            <person name="Reinach F.C."/>
            <person name="Farah C.S."/>
            <person name="Furlan L.R."/>
            <person name="Quaggio R.B."/>
            <person name="Monteiro-Vitorello C.B."/>
            <person name="Van Sluys M.A."/>
            <person name="Almeida N.F. Jr."/>
            <person name="Alves L.M.C."/>
            <person name="do Amaral A.M."/>
            <person name="Bertolini M.C."/>
            <person name="Camargo L.E.A."/>
            <person name="Camarotte G."/>
            <person name="Cannavan F."/>
            <person name="Cardozo J."/>
            <person name="Chambergo F."/>
            <person name="Ciapina L.P."/>
            <person name="Cicarelli R.M.B."/>
            <person name="Coutinho L.L."/>
            <person name="Cursino-Santos J.R."/>
            <person name="El-Dorry H."/>
            <person name="Faria J.B."/>
            <person name="Ferreira A.J.S."/>
            <person name="Ferreira R.C.C."/>
            <person name="Ferro M.I.T."/>
            <person name="Formighieri E.F."/>
            <person name="Franco M.C."/>
            <person name="Greggio C.C."/>
            <person name="Gruber A."/>
            <person name="Katsuyama A.M."/>
            <person name="Kishi L.T."/>
            <person name="Leite R.P."/>
            <person name="Lemos E.G.M."/>
            <person name="Lemos M.V.F."/>
            <person name="Locali E.C."/>
            <person name="Machado M.A."/>
            <person name="Madeira A.M.B.N."/>
            <person name="Martinez-Rossi N.M."/>
            <person name="Martins E.C."/>
            <person name="Meidanis J."/>
            <person name="Menck C.F.M."/>
            <person name="Miyaki C.Y."/>
            <person name="Moon D.H."/>
            <person name="Moreira L.M."/>
            <person name="Novo M.T.M."/>
            <person name="Okura V.K."/>
            <person name="Oliveira M.C."/>
            <person name="Oliveira V.R."/>
            <person name="Pereira H.A."/>
            <person name="Rossi A."/>
            <person name="Sena J.A.D."/>
            <person name="Silva C."/>
            <person name="de Souza R.F."/>
            <person name="Spinola L.A.F."/>
            <person name="Takita M.A."/>
            <person name="Tamura R.E."/>
            <person name="Teixeira E.C."/>
            <person name="Tezza R.I.D."/>
            <person name="Trindade dos Santos M."/>
            <person name="Truffi D."/>
            <person name="Tsai S.M."/>
            <person name="White F.F."/>
            <person name="Setubal J.C."/>
            <person name="Kitajima J.P."/>
        </authorList>
    </citation>
    <scope>NUCLEOTIDE SEQUENCE [LARGE SCALE GENOMIC DNA]</scope>
    <source>
        <strain>ATCC 33913 / DSM 3586 / NCPPB 528 / LMG 568 / P 25</strain>
    </source>
</reference>
<gene>
    <name type="ordered locus">XCC2880</name>
</gene>